<feature type="chain" id="PRO_0000165144" description="Uncharacterized 12.2 kDa protein in e-segB intergenic region">
    <location>
        <begin position="1"/>
        <end position="102"/>
    </location>
</feature>
<gene>
    <name type="primary">y06M</name>
    <name type="synonym">e.2</name>
    <name type="synonym">msp7</name>
</gene>
<dbReference type="EMBL" id="X57093">
    <property type="protein sequence ID" value="CAA40374.1"/>
    <property type="molecule type" value="Genomic_DNA"/>
</dbReference>
<dbReference type="EMBL" id="L13089">
    <property type="protein sequence ID" value="AAB59292.1"/>
    <property type="molecule type" value="Genomic_DNA"/>
</dbReference>
<dbReference type="EMBL" id="AF158101">
    <property type="protein sequence ID" value="AAD42570.1"/>
    <property type="molecule type" value="Genomic_DNA"/>
</dbReference>
<dbReference type="PIR" id="S29532">
    <property type="entry name" value="S29532"/>
</dbReference>
<dbReference type="RefSeq" id="NP_049738.1">
    <property type="nucleotide sequence ID" value="NC_000866.4"/>
</dbReference>
<dbReference type="GeneID" id="1258614"/>
<dbReference type="KEGG" id="vg:1258614"/>
<dbReference type="OrthoDB" id="11453at10239"/>
<dbReference type="Proteomes" id="UP000009087">
    <property type="component" value="Segment"/>
</dbReference>
<keyword id="KW-1185">Reference proteome</keyword>
<protein>
    <recommendedName>
        <fullName>Uncharacterized 12.2 kDa protein in e-segB intergenic region</fullName>
    </recommendedName>
</protein>
<reference key="1">
    <citation type="submission" date="1991-01" db="EMBL/GenBank/DDBJ databases">
        <authorList>
            <person name="Efimov V.P."/>
            <person name="Kutter E.M."/>
            <person name="Mesyanhinov V.V."/>
            <person name="Schneider R."/>
        </authorList>
    </citation>
    <scope>NUCLEOTIDE SEQUENCE [GENOMIC DNA]</scope>
</reference>
<reference key="2">
    <citation type="submission" date="1994-08" db="EMBL/GenBank/DDBJ databases">
        <title>Analysis of the region between lysozyme and the tRNA genes of bacteriophage T4.</title>
        <authorList>
            <person name="Anderson B."/>
            <person name="Zurabishvili T."/>
            <person name="Marusich E."/>
            <person name="Schneider M."/>
            <person name="Mullins T."/>
            <person name="Napuli A."/>
            <person name="Mesyanzhinov V.V."/>
            <person name="Neitzel J."/>
            <person name="Kutter E."/>
        </authorList>
    </citation>
    <scope>NUCLEOTIDE SEQUENCE [GENOMIC DNA]</scope>
    <source>
        <strain>D</strain>
    </source>
</reference>
<reference key="3">
    <citation type="journal article" date="2003" name="Microbiol. Mol. Biol. Rev.">
        <title>Bacteriophage T4 genome.</title>
        <authorList>
            <person name="Miller E.S."/>
            <person name="Kutter E."/>
            <person name="Mosig G."/>
            <person name="Arisaka F."/>
            <person name="Kunisawa T."/>
            <person name="Ruger W."/>
        </authorList>
    </citation>
    <scope>NUCLEOTIDE SEQUENCE [LARGE SCALE GENOMIC DNA]</scope>
</reference>
<sequence length="102" mass="12156">MILKTRWYDLDDGDDGIPVDRVDWNGCSEDTKKRLIREFRMGYQAAKPFTVTDDKFVCIQNGRAKLTNADWFTDKKVLLWYIISLPISSFVFYFFIKIQWTE</sequence>
<name>Y06M_BPT4</name>
<proteinExistence type="predicted"/>
<organismHost>
    <name type="scientific">Escherichia coli</name>
    <dbReference type="NCBI Taxonomy" id="562"/>
</organismHost>
<accession>P32273</accession>
<organism>
    <name type="scientific">Enterobacteria phage T4</name>
    <name type="common">Bacteriophage T4</name>
    <dbReference type="NCBI Taxonomy" id="10665"/>
    <lineage>
        <taxon>Viruses</taxon>
        <taxon>Duplodnaviria</taxon>
        <taxon>Heunggongvirae</taxon>
        <taxon>Uroviricota</taxon>
        <taxon>Caudoviricetes</taxon>
        <taxon>Straboviridae</taxon>
        <taxon>Tevenvirinae</taxon>
        <taxon>Tequatrovirus</taxon>
    </lineage>
</organism>